<evidence type="ECO:0000255" key="1">
    <source>
        <dbReference type="HAMAP-Rule" id="MF_01302"/>
    </source>
</evidence>
<evidence type="ECO:0000256" key="2">
    <source>
        <dbReference type="SAM" id="MobiDB-lite"/>
    </source>
</evidence>
<evidence type="ECO:0000305" key="3"/>
<comment type="function">
    <text evidence="1">One of the primary rRNA binding proteins, it binds directly to 16S rRNA central domain where it helps coordinate assembly of the platform of the 30S subunit.</text>
</comment>
<comment type="subunit">
    <text evidence="1">Part of the 30S ribosomal subunit. Contacts proteins S5 and S12.</text>
</comment>
<comment type="similarity">
    <text evidence="1">Belongs to the universal ribosomal protein uS8 family.</text>
</comment>
<proteinExistence type="inferred from homology"/>
<protein>
    <recommendedName>
        <fullName evidence="1">Small ribosomal subunit protein uS8</fullName>
    </recommendedName>
    <alternativeName>
        <fullName evidence="3">30S ribosomal protein S8</fullName>
    </alternativeName>
</protein>
<gene>
    <name evidence="1" type="primary">rpsH</name>
    <name type="ordered locus">Tgr7_2310</name>
</gene>
<sequence length="131" mass="14075">MSMTDPVADMLTRIRNGQRASKNEVSMPASKLKESIAKVLKDEGYIADYGVDAADGKPVLNIKLKYFQGKPVIETIKRVSRPGLRIYRSKDELPKVIGGLGVAIVSTSNGVMTDRAARALGQGGEVLCIVA</sequence>
<organism>
    <name type="scientific">Thioalkalivibrio sulfidiphilus (strain HL-EbGR7)</name>
    <dbReference type="NCBI Taxonomy" id="396588"/>
    <lineage>
        <taxon>Bacteria</taxon>
        <taxon>Pseudomonadati</taxon>
        <taxon>Pseudomonadota</taxon>
        <taxon>Gammaproteobacteria</taxon>
        <taxon>Chromatiales</taxon>
        <taxon>Ectothiorhodospiraceae</taxon>
        <taxon>Thioalkalivibrio</taxon>
    </lineage>
</organism>
<reference key="1">
    <citation type="journal article" date="2011" name="Stand. Genomic Sci.">
        <title>Complete genome sequence of 'Thioalkalivibrio sulfidophilus' HL-EbGr7.</title>
        <authorList>
            <person name="Muyzer G."/>
            <person name="Sorokin D.Y."/>
            <person name="Mavromatis K."/>
            <person name="Lapidus A."/>
            <person name="Clum A."/>
            <person name="Ivanova N."/>
            <person name="Pati A."/>
            <person name="d'Haeseleer P."/>
            <person name="Woyke T."/>
            <person name="Kyrpides N.C."/>
        </authorList>
    </citation>
    <scope>NUCLEOTIDE SEQUENCE [LARGE SCALE GENOMIC DNA]</scope>
    <source>
        <strain>HL-EbGR7</strain>
    </source>
</reference>
<name>RS8_THISH</name>
<feature type="chain" id="PRO_1000165359" description="Small ribosomal subunit protein uS8">
    <location>
        <begin position="1"/>
        <end position="131"/>
    </location>
</feature>
<feature type="region of interest" description="Disordered" evidence="2">
    <location>
        <begin position="1"/>
        <end position="27"/>
    </location>
</feature>
<dbReference type="EMBL" id="CP001339">
    <property type="protein sequence ID" value="ACL73390.1"/>
    <property type="molecule type" value="Genomic_DNA"/>
</dbReference>
<dbReference type="RefSeq" id="WP_012638866.1">
    <property type="nucleotide sequence ID" value="NC_011901.1"/>
</dbReference>
<dbReference type="SMR" id="B8GV44"/>
<dbReference type="STRING" id="396588.Tgr7_2310"/>
<dbReference type="KEGG" id="tgr:Tgr7_2310"/>
<dbReference type="eggNOG" id="COG0096">
    <property type="taxonomic scope" value="Bacteria"/>
</dbReference>
<dbReference type="HOGENOM" id="CLU_098428_0_0_6"/>
<dbReference type="OrthoDB" id="9802617at2"/>
<dbReference type="Proteomes" id="UP000002383">
    <property type="component" value="Chromosome"/>
</dbReference>
<dbReference type="GO" id="GO:1990904">
    <property type="term" value="C:ribonucleoprotein complex"/>
    <property type="evidence" value="ECO:0007669"/>
    <property type="project" value="UniProtKB-KW"/>
</dbReference>
<dbReference type="GO" id="GO:0005840">
    <property type="term" value="C:ribosome"/>
    <property type="evidence" value="ECO:0007669"/>
    <property type="project" value="UniProtKB-KW"/>
</dbReference>
<dbReference type="GO" id="GO:0019843">
    <property type="term" value="F:rRNA binding"/>
    <property type="evidence" value="ECO:0007669"/>
    <property type="project" value="UniProtKB-UniRule"/>
</dbReference>
<dbReference type="GO" id="GO:0003735">
    <property type="term" value="F:structural constituent of ribosome"/>
    <property type="evidence" value="ECO:0007669"/>
    <property type="project" value="InterPro"/>
</dbReference>
<dbReference type="GO" id="GO:0006412">
    <property type="term" value="P:translation"/>
    <property type="evidence" value="ECO:0007669"/>
    <property type="project" value="UniProtKB-UniRule"/>
</dbReference>
<dbReference type="FunFam" id="3.30.1370.30:FF:000002">
    <property type="entry name" value="30S ribosomal protein S8"/>
    <property type="match status" value="1"/>
</dbReference>
<dbReference type="FunFam" id="3.30.1490.10:FF:000001">
    <property type="entry name" value="30S ribosomal protein S8"/>
    <property type="match status" value="1"/>
</dbReference>
<dbReference type="Gene3D" id="3.30.1370.30">
    <property type="match status" value="1"/>
</dbReference>
<dbReference type="Gene3D" id="3.30.1490.10">
    <property type="match status" value="1"/>
</dbReference>
<dbReference type="HAMAP" id="MF_01302_B">
    <property type="entry name" value="Ribosomal_uS8_B"/>
    <property type="match status" value="1"/>
</dbReference>
<dbReference type="InterPro" id="IPR000630">
    <property type="entry name" value="Ribosomal_uS8"/>
</dbReference>
<dbReference type="InterPro" id="IPR047863">
    <property type="entry name" value="Ribosomal_uS8_CS"/>
</dbReference>
<dbReference type="InterPro" id="IPR035987">
    <property type="entry name" value="Ribosomal_uS8_sf"/>
</dbReference>
<dbReference type="NCBIfam" id="NF001109">
    <property type="entry name" value="PRK00136.1"/>
    <property type="match status" value="1"/>
</dbReference>
<dbReference type="PANTHER" id="PTHR11758">
    <property type="entry name" value="40S RIBOSOMAL PROTEIN S15A"/>
    <property type="match status" value="1"/>
</dbReference>
<dbReference type="Pfam" id="PF00410">
    <property type="entry name" value="Ribosomal_S8"/>
    <property type="match status" value="1"/>
</dbReference>
<dbReference type="SUPFAM" id="SSF56047">
    <property type="entry name" value="Ribosomal protein S8"/>
    <property type="match status" value="1"/>
</dbReference>
<dbReference type="PROSITE" id="PS00053">
    <property type="entry name" value="RIBOSOMAL_S8"/>
    <property type="match status" value="1"/>
</dbReference>
<accession>B8GV44</accession>
<keyword id="KW-1185">Reference proteome</keyword>
<keyword id="KW-0687">Ribonucleoprotein</keyword>
<keyword id="KW-0689">Ribosomal protein</keyword>
<keyword id="KW-0694">RNA-binding</keyword>
<keyword id="KW-0699">rRNA-binding</keyword>